<keyword id="KW-0131">Cell cycle</keyword>
<keyword id="KW-0132">Cell division</keyword>
<keyword id="KW-0997">Cell inner membrane</keyword>
<keyword id="KW-1003">Cell membrane</keyword>
<keyword id="KW-0133">Cell shape</keyword>
<keyword id="KW-0961">Cell wall biogenesis/degradation</keyword>
<keyword id="KW-0460">Magnesium</keyword>
<keyword id="KW-0472">Membrane</keyword>
<keyword id="KW-0479">Metal-binding</keyword>
<keyword id="KW-0573">Peptidoglycan synthesis</keyword>
<keyword id="KW-1185">Reference proteome</keyword>
<keyword id="KW-0808">Transferase</keyword>
<keyword id="KW-0812">Transmembrane</keyword>
<keyword id="KW-1133">Transmembrane helix</keyword>
<evidence type="ECO:0000255" key="1">
    <source>
        <dbReference type="HAMAP-Rule" id="MF_00038"/>
    </source>
</evidence>
<protein>
    <recommendedName>
        <fullName evidence="1">Phospho-N-acetylmuramoyl-pentapeptide-transferase</fullName>
        <ecNumber evidence="1">2.7.8.13</ecNumber>
    </recommendedName>
    <alternativeName>
        <fullName evidence="1">UDP-MurNAc-pentapeptide phosphotransferase</fullName>
    </alternativeName>
</protein>
<dbReference type="EC" id="2.7.8.13" evidence="1"/>
<dbReference type="EMBL" id="AE017143">
    <property type="protein sequence ID" value="AAP95230.1"/>
    <property type="molecule type" value="Genomic_DNA"/>
</dbReference>
<dbReference type="RefSeq" id="WP_010944283.1">
    <property type="nucleotide sequence ID" value="NC_002940.2"/>
</dbReference>
<dbReference type="SMR" id="Q7VP57"/>
<dbReference type="STRING" id="233412.HD_0244"/>
<dbReference type="KEGG" id="hdu:HD_0244"/>
<dbReference type="eggNOG" id="COG0472">
    <property type="taxonomic scope" value="Bacteria"/>
</dbReference>
<dbReference type="HOGENOM" id="CLU_023982_0_0_6"/>
<dbReference type="OrthoDB" id="9805475at2"/>
<dbReference type="UniPathway" id="UPA00219"/>
<dbReference type="Proteomes" id="UP000001022">
    <property type="component" value="Chromosome"/>
</dbReference>
<dbReference type="GO" id="GO:0005886">
    <property type="term" value="C:plasma membrane"/>
    <property type="evidence" value="ECO:0007669"/>
    <property type="project" value="UniProtKB-SubCell"/>
</dbReference>
<dbReference type="GO" id="GO:0046872">
    <property type="term" value="F:metal ion binding"/>
    <property type="evidence" value="ECO:0007669"/>
    <property type="project" value="UniProtKB-KW"/>
</dbReference>
<dbReference type="GO" id="GO:0008963">
    <property type="term" value="F:phospho-N-acetylmuramoyl-pentapeptide-transferase activity"/>
    <property type="evidence" value="ECO:0007669"/>
    <property type="project" value="UniProtKB-UniRule"/>
</dbReference>
<dbReference type="GO" id="GO:0051992">
    <property type="term" value="F:UDP-N-acetylmuramoyl-L-alanyl-D-glutamyl-meso-2,6-diaminopimelyl-D-alanyl-D-alanine:undecaprenyl-phosphate transferase activity"/>
    <property type="evidence" value="ECO:0007669"/>
    <property type="project" value="RHEA"/>
</dbReference>
<dbReference type="GO" id="GO:0051301">
    <property type="term" value="P:cell division"/>
    <property type="evidence" value="ECO:0007669"/>
    <property type="project" value="UniProtKB-KW"/>
</dbReference>
<dbReference type="GO" id="GO:0071555">
    <property type="term" value="P:cell wall organization"/>
    <property type="evidence" value="ECO:0007669"/>
    <property type="project" value="UniProtKB-KW"/>
</dbReference>
<dbReference type="GO" id="GO:0009252">
    <property type="term" value="P:peptidoglycan biosynthetic process"/>
    <property type="evidence" value="ECO:0007669"/>
    <property type="project" value="UniProtKB-UniRule"/>
</dbReference>
<dbReference type="GO" id="GO:0008360">
    <property type="term" value="P:regulation of cell shape"/>
    <property type="evidence" value="ECO:0007669"/>
    <property type="project" value="UniProtKB-KW"/>
</dbReference>
<dbReference type="CDD" id="cd06852">
    <property type="entry name" value="GT_MraY"/>
    <property type="match status" value="1"/>
</dbReference>
<dbReference type="HAMAP" id="MF_00038">
    <property type="entry name" value="MraY"/>
    <property type="match status" value="1"/>
</dbReference>
<dbReference type="InterPro" id="IPR000715">
    <property type="entry name" value="Glycosyl_transferase_4"/>
</dbReference>
<dbReference type="InterPro" id="IPR003524">
    <property type="entry name" value="PNAcMuramoyl-5peptid_Trfase"/>
</dbReference>
<dbReference type="InterPro" id="IPR018480">
    <property type="entry name" value="PNAcMuramoyl-5peptid_Trfase_CS"/>
</dbReference>
<dbReference type="NCBIfam" id="TIGR00445">
    <property type="entry name" value="mraY"/>
    <property type="match status" value="1"/>
</dbReference>
<dbReference type="PANTHER" id="PTHR22926">
    <property type="entry name" value="PHOSPHO-N-ACETYLMURAMOYL-PENTAPEPTIDE-TRANSFERASE"/>
    <property type="match status" value="1"/>
</dbReference>
<dbReference type="PANTHER" id="PTHR22926:SF5">
    <property type="entry name" value="PHOSPHO-N-ACETYLMURAMOYL-PENTAPEPTIDE-TRANSFERASE HOMOLOG"/>
    <property type="match status" value="1"/>
</dbReference>
<dbReference type="Pfam" id="PF00953">
    <property type="entry name" value="Glycos_transf_4"/>
    <property type="match status" value="1"/>
</dbReference>
<dbReference type="Pfam" id="PF10555">
    <property type="entry name" value="MraY_sig1"/>
    <property type="match status" value="1"/>
</dbReference>
<dbReference type="PROSITE" id="PS01347">
    <property type="entry name" value="MRAY_1"/>
    <property type="match status" value="1"/>
</dbReference>
<dbReference type="PROSITE" id="PS01348">
    <property type="entry name" value="MRAY_2"/>
    <property type="match status" value="1"/>
</dbReference>
<gene>
    <name evidence="1" type="primary">mraY</name>
    <name type="ordered locus">HD_0244</name>
</gene>
<accession>Q7VP57</accession>
<sequence length="360" mass="40242">MLVWFAEYLLKYNTAFNVVSYISFRSIMALLTAMAIGLWIGPKVINRLQILKFGQEVRNDGPESHFKKRGTPTMGGIMILVSIGVSSLLWADLRNPYVWFTLFVLFGYGIVGFVDDYWKIARKNTDGLVARWKYFWLSFIAFIAAFSMYAMGKDTAATQLVVPFFKEVMPQLGLFYIILAYFVIVGTSNAVNLTDGLDGLAIVPTIMVTAAFALIAWATGNIHAAEYLYIPYIRHSGELAIMCTAIVGAGLGFLWYNTYPAQVFMGDVGSLSLGGALGVIAVLVRQELLLLVMGGVFVVEALSVILQVGSYKLRQKRIFRMAPIHHHFELKGWPEPRVIVRFWIITLVLVLVGLVTLKLR</sequence>
<proteinExistence type="inferred from homology"/>
<name>MRAY_HAEDU</name>
<organism>
    <name type="scientific">Haemophilus ducreyi (strain 35000HP / ATCC 700724)</name>
    <dbReference type="NCBI Taxonomy" id="233412"/>
    <lineage>
        <taxon>Bacteria</taxon>
        <taxon>Pseudomonadati</taxon>
        <taxon>Pseudomonadota</taxon>
        <taxon>Gammaproteobacteria</taxon>
        <taxon>Pasteurellales</taxon>
        <taxon>Pasteurellaceae</taxon>
        <taxon>Haemophilus</taxon>
    </lineage>
</organism>
<reference key="1">
    <citation type="submission" date="2003-06" db="EMBL/GenBank/DDBJ databases">
        <title>The complete genome sequence of Haemophilus ducreyi.</title>
        <authorList>
            <person name="Munson R.S. Jr."/>
            <person name="Ray W.C."/>
            <person name="Mahairas G."/>
            <person name="Sabo P."/>
            <person name="Mungur R."/>
            <person name="Johnson L."/>
            <person name="Nguyen D."/>
            <person name="Wang J."/>
            <person name="Forst C."/>
            <person name="Hood L."/>
        </authorList>
    </citation>
    <scope>NUCLEOTIDE SEQUENCE [LARGE SCALE GENOMIC DNA]</scope>
    <source>
        <strain>35000HP / ATCC 700724</strain>
    </source>
</reference>
<comment type="function">
    <text evidence="1">Catalyzes the initial step of the lipid cycle reactions in the biosynthesis of the cell wall peptidoglycan: transfers peptidoglycan precursor phospho-MurNAc-pentapeptide from UDP-MurNAc-pentapeptide onto the lipid carrier undecaprenyl phosphate, yielding undecaprenyl-pyrophosphoryl-MurNAc-pentapeptide, known as lipid I.</text>
</comment>
<comment type="catalytic activity">
    <reaction evidence="1">
        <text>UDP-N-acetyl-alpha-D-muramoyl-L-alanyl-gamma-D-glutamyl-meso-2,6-diaminopimeloyl-D-alanyl-D-alanine + di-trans,octa-cis-undecaprenyl phosphate = di-trans,octa-cis-undecaprenyl diphospho-N-acetyl-alpha-D-muramoyl-L-alanyl-D-glutamyl-meso-2,6-diaminopimeloyl-D-alanyl-D-alanine + UMP</text>
        <dbReference type="Rhea" id="RHEA:28386"/>
        <dbReference type="ChEBI" id="CHEBI:57865"/>
        <dbReference type="ChEBI" id="CHEBI:60392"/>
        <dbReference type="ChEBI" id="CHEBI:61386"/>
        <dbReference type="ChEBI" id="CHEBI:61387"/>
        <dbReference type="EC" id="2.7.8.13"/>
    </reaction>
</comment>
<comment type="cofactor">
    <cofactor evidence="1">
        <name>Mg(2+)</name>
        <dbReference type="ChEBI" id="CHEBI:18420"/>
    </cofactor>
</comment>
<comment type="pathway">
    <text evidence="1">Cell wall biogenesis; peptidoglycan biosynthesis.</text>
</comment>
<comment type="subcellular location">
    <subcellularLocation>
        <location evidence="1">Cell inner membrane</location>
        <topology evidence="1">Multi-pass membrane protein</topology>
    </subcellularLocation>
</comment>
<comment type="similarity">
    <text evidence="1">Belongs to the glycosyltransferase 4 family. MraY subfamily.</text>
</comment>
<feature type="chain" id="PRO_0000108832" description="Phospho-N-acetylmuramoyl-pentapeptide-transferase">
    <location>
        <begin position="1"/>
        <end position="360"/>
    </location>
</feature>
<feature type="transmembrane region" description="Helical" evidence="1">
    <location>
        <begin position="26"/>
        <end position="46"/>
    </location>
</feature>
<feature type="transmembrane region" description="Helical" evidence="1">
    <location>
        <begin position="73"/>
        <end position="93"/>
    </location>
</feature>
<feature type="transmembrane region" description="Helical" evidence="1">
    <location>
        <begin position="98"/>
        <end position="118"/>
    </location>
</feature>
<feature type="transmembrane region" description="Helical" evidence="1">
    <location>
        <begin position="132"/>
        <end position="152"/>
    </location>
</feature>
<feature type="transmembrane region" description="Helical" evidence="1">
    <location>
        <begin position="168"/>
        <end position="188"/>
    </location>
</feature>
<feature type="transmembrane region" description="Helical" evidence="1">
    <location>
        <begin position="199"/>
        <end position="219"/>
    </location>
</feature>
<feature type="transmembrane region" description="Helical" evidence="1">
    <location>
        <begin position="236"/>
        <end position="256"/>
    </location>
</feature>
<feature type="transmembrane region" description="Helical" evidence="1">
    <location>
        <begin position="263"/>
        <end position="283"/>
    </location>
</feature>
<feature type="transmembrane region" description="Helical" evidence="1">
    <location>
        <begin position="288"/>
        <end position="308"/>
    </location>
</feature>
<feature type="transmembrane region" description="Helical" evidence="1">
    <location>
        <begin position="338"/>
        <end position="358"/>
    </location>
</feature>